<evidence type="ECO:0000250" key="1"/>
<evidence type="ECO:0000255" key="2">
    <source>
        <dbReference type="PROSITE-ProRule" id="PRU00068"/>
    </source>
</evidence>
<evidence type="ECO:0000269" key="3">
    <source>
    </source>
</evidence>
<evidence type="ECO:0000305" key="4"/>
<evidence type="ECO:0007829" key="5">
    <source>
        <dbReference type="PDB" id="1TEJ"/>
    </source>
</evidence>
<organism>
    <name type="scientific">Echis carinatus</name>
    <name type="common">Saw-scaled viper</name>
    <dbReference type="NCBI Taxonomy" id="40353"/>
    <lineage>
        <taxon>Eukaryota</taxon>
        <taxon>Metazoa</taxon>
        <taxon>Chordata</taxon>
        <taxon>Craniata</taxon>
        <taxon>Vertebrata</taxon>
        <taxon>Euteleostomi</taxon>
        <taxon>Lepidosauria</taxon>
        <taxon>Squamata</taxon>
        <taxon>Bifurcata</taxon>
        <taxon>Unidentata</taxon>
        <taxon>Episquamata</taxon>
        <taxon>Toxicofera</taxon>
        <taxon>Serpentes</taxon>
        <taxon>Colubroidea</taxon>
        <taxon>Viperidae</taxon>
        <taxon>Viperinae</taxon>
        <taxon>Echis</taxon>
    </lineage>
</organism>
<reference key="1">
    <citation type="journal article" date="2005" name="Biochemistry">
        <title>Crystal structure of the disintegrin heterodimer from saw-scaled viper (Echis carinatus) at 1.9 A resolution.</title>
        <authorList>
            <person name="Bilgrami S."/>
            <person name="Yadav S."/>
            <person name="Kaur P."/>
            <person name="Sharma S."/>
            <person name="Perbandt M."/>
            <person name="Betzel C."/>
            <person name="Singh T.P."/>
        </authorList>
    </citation>
    <scope>PROTEIN SEQUENCE</scope>
    <scope>SUBUNIT</scope>
    <scope>X-RAY CRYSTALLOGRAPHY (1.9 ANGSTROMS)</scope>
    <scope>DISULFIDE BONDS</scope>
    <source>
        <tissue>Venom</tissue>
    </source>
</reference>
<proteinExistence type="evidence at protein level"/>
<accession>P0C6B4</accession>
<keyword id="KW-0002">3D-structure</keyword>
<keyword id="KW-1217">Cell adhesion impairing toxin</keyword>
<keyword id="KW-0903">Direct protein sequencing</keyword>
<keyword id="KW-1015">Disulfide bond</keyword>
<keyword id="KW-1199">Hemostasis impairing toxin</keyword>
<keyword id="KW-1201">Platelet aggregation inhibiting toxin</keyword>
<keyword id="KW-0964">Secreted</keyword>
<keyword id="KW-0800">Toxin</keyword>
<feature type="chain" id="PRO_0000319469" description="Disintegrin schistatin-like subunit A">
    <location>
        <begin position="1"/>
        <end position="62"/>
    </location>
</feature>
<feature type="domain" description="Disintegrin" evidence="2">
    <location>
        <begin position="1"/>
        <end position="62"/>
    </location>
</feature>
<feature type="short sequence motif" description="Cell attachment site">
    <location>
        <begin position="41"/>
        <end position="43"/>
    </location>
</feature>
<feature type="disulfide bond" evidence="2 3">
    <location>
        <begin position="5"/>
        <end position="28"/>
    </location>
</feature>
<feature type="disulfide bond" description="Interchain (with C-12 in subunit B)" evidence="2 3">
    <location>
        <position position="6"/>
    </location>
</feature>
<feature type="disulfide bond" description="Interchain (with C-7 in subunit B)" evidence="2 3">
    <location>
        <position position="11"/>
    </location>
</feature>
<feature type="disulfide bond" evidence="2 3">
    <location>
        <begin position="19"/>
        <end position="25"/>
    </location>
</feature>
<feature type="disulfide bond" evidence="2 3">
    <location>
        <begin position="24"/>
        <end position="49"/>
    </location>
</feature>
<feature type="disulfide bond" evidence="2 3">
    <location>
        <begin position="37"/>
        <end position="56"/>
    </location>
</feature>
<feature type="turn" evidence="5">
    <location>
        <begin position="8"/>
        <end position="11"/>
    </location>
</feature>
<feature type="strand" evidence="5">
    <location>
        <begin position="20"/>
        <end position="22"/>
    </location>
</feature>
<feature type="strand" evidence="5">
    <location>
        <begin position="36"/>
        <end position="38"/>
    </location>
</feature>
<feature type="strand" evidence="5">
    <location>
        <begin position="41"/>
        <end position="44"/>
    </location>
</feature>
<name>DIDLA_ECHCA</name>
<dbReference type="PDB" id="1TEJ">
    <property type="method" value="X-ray"/>
    <property type="resolution" value="1.90 A"/>
    <property type="chains" value="A=1-62"/>
</dbReference>
<dbReference type="PDBsum" id="1TEJ"/>
<dbReference type="SMR" id="P0C6B4"/>
<dbReference type="EvolutionaryTrace" id="P0C6B4"/>
<dbReference type="GO" id="GO:0005576">
    <property type="term" value="C:extracellular region"/>
    <property type="evidence" value="ECO:0007669"/>
    <property type="project" value="UniProtKB-SubCell"/>
</dbReference>
<dbReference type="GO" id="GO:0090729">
    <property type="term" value="F:toxin activity"/>
    <property type="evidence" value="ECO:0007669"/>
    <property type="project" value="UniProtKB-KW"/>
</dbReference>
<dbReference type="Gene3D" id="4.10.70.10">
    <property type="entry name" value="Disintegrin domain"/>
    <property type="match status" value="1"/>
</dbReference>
<dbReference type="InterPro" id="IPR018358">
    <property type="entry name" value="Disintegrin_CS"/>
</dbReference>
<dbReference type="InterPro" id="IPR001762">
    <property type="entry name" value="Disintegrin_dom"/>
</dbReference>
<dbReference type="InterPro" id="IPR036436">
    <property type="entry name" value="Disintegrin_dom_sf"/>
</dbReference>
<dbReference type="Pfam" id="PF00200">
    <property type="entry name" value="Disintegrin"/>
    <property type="match status" value="1"/>
</dbReference>
<dbReference type="PRINTS" id="PR00289">
    <property type="entry name" value="DISINTEGRIN"/>
</dbReference>
<dbReference type="SMART" id="SM00050">
    <property type="entry name" value="DISIN"/>
    <property type="match status" value="1"/>
</dbReference>
<dbReference type="SUPFAM" id="SSF57552">
    <property type="entry name" value="Blood coagulation inhibitor (disintegrin)"/>
    <property type="match status" value="1"/>
</dbReference>
<dbReference type="PROSITE" id="PS00427">
    <property type="entry name" value="DISINTEGRIN_1"/>
    <property type="match status" value="1"/>
</dbReference>
<dbReference type="PROSITE" id="PS50214">
    <property type="entry name" value="DISINTEGRIN_2"/>
    <property type="match status" value="1"/>
</dbReference>
<sequence length="62" mass="6795">SVNPCCDPVICKPRDGEHCISGPCCNNCKFLNSGTICQRARGDGNHDYCTGITTDCPRNRYN</sequence>
<comment type="function">
    <text evidence="1">May bind to both alpha-IIb/beta-3 (ITGA2B/ITGB3) and alpha-V/beta-3 (ITGAV/ITGB3) integrins, and may inhibit platelet aggregation.</text>
</comment>
<comment type="subunit">
    <text evidence="3">Heterodimer with subunit B; disulfide-linked.</text>
</comment>
<comment type="subcellular location">
    <subcellularLocation>
        <location>Secreted</location>
    </subcellularLocation>
</comment>
<comment type="tissue specificity">
    <text>Expressed by the venom gland.</text>
</comment>
<comment type="similarity">
    <text evidence="4">Belongs to the disintegrin family. Dimeric disintegrin subfamily.</text>
</comment>
<protein>
    <recommendedName>
        <fullName>Disintegrin schistatin-like subunit A</fullName>
    </recommendedName>
</protein>